<gene>
    <name evidence="1" type="primary">rplV</name>
    <name type="ordered locus">Bamb_0272</name>
</gene>
<comment type="function">
    <text evidence="1">This protein binds specifically to 23S rRNA; its binding is stimulated by other ribosomal proteins, e.g. L4, L17, and L20. It is important during the early stages of 50S assembly. It makes multiple contacts with different domains of the 23S rRNA in the assembled 50S subunit and ribosome (By similarity).</text>
</comment>
<comment type="function">
    <text evidence="1">The globular domain of the protein is located near the polypeptide exit tunnel on the outside of the subunit, while an extended beta-hairpin is found that lines the wall of the exit tunnel in the center of the 70S ribosome.</text>
</comment>
<comment type="subunit">
    <text evidence="1">Part of the 50S ribosomal subunit.</text>
</comment>
<comment type="similarity">
    <text evidence="1">Belongs to the universal ribosomal protein uL22 family.</text>
</comment>
<evidence type="ECO:0000255" key="1">
    <source>
        <dbReference type="HAMAP-Rule" id="MF_01331"/>
    </source>
</evidence>
<evidence type="ECO:0000305" key="2"/>
<protein>
    <recommendedName>
        <fullName evidence="1">Large ribosomal subunit protein uL22</fullName>
    </recommendedName>
    <alternativeName>
        <fullName evidence="2">50S ribosomal protein L22</fullName>
    </alternativeName>
</protein>
<keyword id="KW-0687">Ribonucleoprotein</keyword>
<keyword id="KW-0689">Ribosomal protein</keyword>
<keyword id="KW-0694">RNA-binding</keyword>
<keyword id="KW-0699">rRNA-binding</keyword>
<sequence>MEVKAIHRGARISAQKTRLVADQIRGLPVDKALNVLTFSPKKAAGIVKKVVLSAIANAEHNEGADIDELKIKSIYVDKAASLKRFTARAKGRGNRIEKQSCHITVTVGN</sequence>
<reference key="1">
    <citation type="submission" date="2006-08" db="EMBL/GenBank/DDBJ databases">
        <title>Complete sequence of chromosome 1 of Burkholderia cepacia AMMD.</title>
        <authorList>
            <person name="Copeland A."/>
            <person name="Lucas S."/>
            <person name="Lapidus A."/>
            <person name="Barry K."/>
            <person name="Detter J.C."/>
            <person name="Glavina del Rio T."/>
            <person name="Hammon N."/>
            <person name="Israni S."/>
            <person name="Pitluck S."/>
            <person name="Bruce D."/>
            <person name="Chain P."/>
            <person name="Malfatti S."/>
            <person name="Shin M."/>
            <person name="Vergez L."/>
            <person name="Schmutz J."/>
            <person name="Larimer F."/>
            <person name="Land M."/>
            <person name="Hauser L."/>
            <person name="Kyrpides N."/>
            <person name="Kim E."/>
            <person name="Parke J."/>
            <person name="Coenye T."/>
            <person name="Konstantinidis K."/>
            <person name="Ramette A."/>
            <person name="Tiedje J."/>
            <person name="Richardson P."/>
        </authorList>
    </citation>
    <scope>NUCLEOTIDE SEQUENCE [LARGE SCALE GENOMIC DNA]</scope>
    <source>
        <strain>ATCC BAA-244 / DSM 16087 / CCUG 44356 / LMG 19182 / AMMD</strain>
    </source>
</reference>
<accession>Q0BJ41</accession>
<feature type="chain" id="PRO_1000052545" description="Large ribosomal subunit protein uL22">
    <location>
        <begin position="1"/>
        <end position="109"/>
    </location>
</feature>
<proteinExistence type="inferred from homology"/>
<dbReference type="EMBL" id="CP000440">
    <property type="protein sequence ID" value="ABI85832.1"/>
    <property type="molecule type" value="Genomic_DNA"/>
</dbReference>
<dbReference type="RefSeq" id="WP_004199272.1">
    <property type="nucleotide sequence ID" value="NZ_CP009798.1"/>
</dbReference>
<dbReference type="SMR" id="Q0BJ41"/>
<dbReference type="GeneID" id="98107155"/>
<dbReference type="KEGG" id="bam:Bamb_0272"/>
<dbReference type="PATRIC" id="fig|339670.21.peg.1348"/>
<dbReference type="eggNOG" id="COG0091">
    <property type="taxonomic scope" value="Bacteria"/>
</dbReference>
<dbReference type="Proteomes" id="UP000000662">
    <property type="component" value="Chromosome 1"/>
</dbReference>
<dbReference type="GO" id="GO:0022625">
    <property type="term" value="C:cytosolic large ribosomal subunit"/>
    <property type="evidence" value="ECO:0007669"/>
    <property type="project" value="TreeGrafter"/>
</dbReference>
<dbReference type="GO" id="GO:0019843">
    <property type="term" value="F:rRNA binding"/>
    <property type="evidence" value="ECO:0007669"/>
    <property type="project" value="UniProtKB-UniRule"/>
</dbReference>
<dbReference type="GO" id="GO:0003735">
    <property type="term" value="F:structural constituent of ribosome"/>
    <property type="evidence" value="ECO:0007669"/>
    <property type="project" value="InterPro"/>
</dbReference>
<dbReference type="GO" id="GO:0006412">
    <property type="term" value="P:translation"/>
    <property type="evidence" value="ECO:0007669"/>
    <property type="project" value="UniProtKB-UniRule"/>
</dbReference>
<dbReference type="CDD" id="cd00336">
    <property type="entry name" value="Ribosomal_L22"/>
    <property type="match status" value="1"/>
</dbReference>
<dbReference type="FunFam" id="3.90.470.10:FF:000001">
    <property type="entry name" value="50S ribosomal protein L22"/>
    <property type="match status" value="1"/>
</dbReference>
<dbReference type="Gene3D" id="3.90.470.10">
    <property type="entry name" value="Ribosomal protein L22/L17"/>
    <property type="match status" value="1"/>
</dbReference>
<dbReference type="HAMAP" id="MF_01331_B">
    <property type="entry name" value="Ribosomal_uL22_B"/>
    <property type="match status" value="1"/>
</dbReference>
<dbReference type="InterPro" id="IPR001063">
    <property type="entry name" value="Ribosomal_uL22"/>
</dbReference>
<dbReference type="InterPro" id="IPR005727">
    <property type="entry name" value="Ribosomal_uL22_bac/chlpt-type"/>
</dbReference>
<dbReference type="InterPro" id="IPR047867">
    <property type="entry name" value="Ribosomal_uL22_bac/org-type"/>
</dbReference>
<dbReference type="InterPro" id="IPR018260">
    <property type="entry name" value="Ribosomal_uL22_CS"/>
</dbReference>
<dbReference type="InterPro" id="IPR036394">
    <property type="entry name" value="Ribosomal_uL22_sf"/>
</dbReference>
<dbReference type="NCBIfam" id="TIGR01044">
    <property type="entry name" value="rplV_bact"/>
    <property type="match status" value="1"/>
</dbReference>
<dbReference type="PANTHER" id="PTHR13501">
    <property type="entry name" value="CHLOROPLAST 50S RIBOSOMAL PROTEIN L22-RELATED"/>
    <property type="match status" value="1"/>
</dbReference>
<dbReference type="PANTHER" id="PTHR13501:SF8">
    <property type="entry name" value="LARGE RIBOSOMAL SUBUNIT PROTEIN UL22M"/>
    <property type="match status" value="1"/>
</dbReference>
<dbReference type="Pfam" id="PF00237">
    <property type="entry name" value="Ribosomal_L22"/>
    <property type="match status" value="1"/>
</dbReference>
<dbReference type="SUPFAM" id="SSF54843">
    <property type="entry name" value="Ribosomal protein L22"/>
    <property type="match status" value="1"/>
</dbReference>
<dbReference type="PROSITE" id="PS00464">
    <property type="entry name" value="RIBOSOMAL_L22"/>
    <property type="match status" value="1"/>
</dbReference>
<name>RL22_BURCM</name>
<organism>
    <name type="scientific">Burkholderia ambifaria (strain ATCC BAA-244 / DSM 16087 / CCUG 44356 / LMG 19182 / AMMD)</name>
    <name type="common">Burkholderia cepacia (strain AMMD)</name>
    <dbReference type="NCBI Taxonomy" id="339670"/>
    <lineage>
        <taxon>Bacteria</taxon>
        <taxon>Pseudomonadati</taxon>
        <taxon>Pseudomonadota</taxon>
        <taxon>Betaproteobacteria</taxon>
        <taxon>Burkholderiales</taxon>
        <taxon>Burkholderiaceae</taxon>
        <taxon>Burkholderia</taxon>
        <taxon>Burkholderia cepacia complex</taxon>
    </lineage>
</organism>